<organism>
    <name type="scientific">Vibrio harveyi</name>
    <name type="common">Beneckea harveyi</name>
    <dbReference type="NCBI Taxonomy" id="669"/>
    <lineage>
        <taxon>Bacteria</taxon>
        <taxon>Pseudomonadati</taxon>
        <taxon>Pseudomonadota</taxon>
        <taxon>Gammaproteobacteria</taxon>
        <taxon>Vibrionales</taxon>
        <taxon>Vibrionaceae</taxon>
        <taxon>Vibrio</taxon>
    </lineage>
</organism>
<feature type="chain" id="PRO_0000070605" description="HTH-type transcriptional regulator LuxR">
    <location>
        <begin position="1"/>
        <end position="205"/>
    </location>
</feature>
<feature type="domain" description="HTH tetR-type" evidence="1">
    <location>
        <begin position="15"/>
        <end position="75"/>
    </location>
</feature>
<feature type="DNA-binding region" description="H-T-H motif" evidence="1">
    <location>
        <begin position="39"/>
        <end position="58"/>
    </location>
</feature>
<name>LUXR_VIBHA</name>
<keyword id="KW-0010">Activator</keyword>
<keyword id="KW-0903">Direct protein sequencing</keyword>
<keyword id="KW-0238">DNA-binding</keyword>
<keyword id="KW-0455">Luminescence</keyword>
<keyword id="KW-0804">Transcription</keyword>
<keyword id="KW-0805">Transcription regulation</keyword>
<protein>
    <recommendedName>
        <fullName>HTH-type transcriptional regulator LuxR</fullName>
    </recommendedName>
</protein>
<evidence type="ECO:0000255" key="1">
    <source>
        <dbReference type="PROSITE-ProRule" id="PRU00335"/>
    </source>
</evidence>
<reference key="1">
    <citation type="journal article" date="1990" name="J. Bacteriol.">
        <title>Cloning and nucleotide sequence of luxR, a regulatory gene controlling bioluminescence in Vibrio harveyi.</title>
        <authorList>
            <person name="Showalter R.E."/>
            <person name="Martin M.O."/>
            <person name="Silverman M.R."/>
        </authorList>
    </citation>
    <scope>NUCLEOTIDE SEQUENCE [GENOMIC DNA]</scope>
    <source>
        <strain>BB7</strain>
    </source>
</reference>
<reference key="2">
    <citation type="journal article" date="1993" name="J. Biol. Chem.">
        <title>Purification and characterization of a poly(dA-dT) lux-specific DNA-binding protein from Vibrio harveyi and identification as LuxR.</title>
        <authorList>
            <person name="Swartzman E."/>
            <person name="Meighen E.A."/>
        </authorList>
    </citation>
    <scope>PROTEIN SEQUENCE OF 1-12</scope>
</reference>
<proteinExistence type="evidence at protein level"/>
<accession>P21308</accession>
<dbReference type="EMBL" id="M55260">
    <property type="protein sequence ID" value="AAA27539.1"/>
    <property type="molecule type" value="Genomic_DNA"/>
</dbReference>
<dbReference type="PIR" id="A35386">
    <property type="entry name" value="A35386"/>
</dbReference>
<dbReference type="SMR" id="P21308"/>
<dbReference type="STRING" id="669.AL538_06465"/>
<dbReference type="ChEMBL" id="CHEMBL5291573"/>
<dbReference type="GO" id="GO:0003700">
    <property type="term" value="F:DNA-binding transcription factor activity"/>
    <property type="evidence" value="ECO:0007669"/>
    <property type="project" value="TreeGrafter"/>
</dbReference>
<dbReference type="GO" id="GO:0000976">
    <property type="term" value="F:transcription cis-regulatory region binding"/>
    <property type="evidence" value="ECO:0007669"/>
    <property type="project" value="TreeGrafter"/>
</dbReference>
<dbReference type="GO" id="GO:0008218">
    <property type="term" value="P:bioluminescence"/>
    <property type="evidence" value="ECO:0007669"/>
    <property type="project" value="UniProtKB-KW"/>
</dbReference>
<dbReference type="FunFam" id="1.10.357.10:FF:000019">
    <property type="entry name" value="LuxR family transcriptional regulator"/>
    <property type="match status" value="1"/>
</dbReference>
<dbReference type="Gene3D" id="1.10.357.10">
    <property type="entry name" value="Tetracycline Repressor, domain 2"/>
    <property type="match status" value="1"/>
</dbReference>
<dbReference type="InterPro" id="IPR009057">
    <property type="entry name" value="Homeodomain-like_sf"/>
</dbReference>
<dbReference type="InterPro" id="IPR050109">
    <property type="entry name" value="HTH-type_TetR-like_transc_reg"/>
</dbReference>
<dbReference type="InterPro" id="IPR001647">
    <property type="entry name" value="HTH_TetR"/>
</dbReference>
<dbReference type="InterPro" id="IPR036271">
    <property type="entry name" value="Tet_transcr_reg_TetR-rel_C_sf"/>
</dbReference>
<dbReference type="NCBIfam" id="NF040929">
    <property type="entry name" value="quorum_TF_HapR"/>
    <property type="match status" value="1"/>
</dbReference>
<dbReference type="PANTHER" id="PTHR30055:SF234">
    <property type="entry name" value="HTH-TYPE TRANSCRIPTIONAL REGULATOR BETI"/>
    <property type="match status" value="1"/>
</dbReference>
<dbReference type="PANTHER" id="PTHR30055">
    <property type="entry name" value="HTH-TYPE TRANSCRIPTIONAL REGULATOR RUTR"/>
    <property type="match status" value="1"/>
</dbReference>
<dbReference type="Pfam" id="PF00440">
    <property type="entry name" value="TetR_N"/>
    <property type="match status" value="1"/>
</dbReference>
<dbReference type="PRINTS" id="PR00455">
    <property type="entry name" value="HTHTETR"/>
</dbReference>
<dbReference type="SUPFAM" id="SSF46689">
    <property type="entry name" value="Homeodomain-like"/>
    <property type="match status" value="1"/>
</dbReference>
<dbReference type="SUPFAM" id="SSF48498">
    <property type="entry name" value="Tetracyclin repressor-like, C-terminal domain"/>
    <property type="match status" value="1"/>
</dbReference>
<dbReference type="PROSITE" id="PS50977">
    <property type="entry name" value="HTH_TETR_2"/>
    <property type="match status" value="1"/>
</dbReference>
<comment type="function">
    <text>Regulatory protein of bacterial bioluminescence. It probably binds the autoinducer molecule and potentiates the transcription of the bioluminescence operon.</text>
</comment>
<sequence length="205" mass="23738">MDSIAKRPRTRLSPLKRKQQLMEIALEVFARRGIGRGGHADIAEIAQVSVATVFNYFPTREDLVDEVLNHVVRQFSNFLSDNIDLDIHARENIANITNAMIELVSQDCHWLKVWFEWSASTRDEVWPLFVTTNRTNQLLVQNMFIKAIERGEVCDQHEPEHLANLFHGICYSIFVQANRSKSEAELTNLVSAYLDMLCIYNREHH</sequence>
<gene>
    <name type="primary">luxR</name>
</gene>